<proteinExistence type="inferred from homology"/>
<evidence type="ECO:0000255" key="1">
    <source>
        <dbReference type="HAMAP-Rule" id="MF_01363"/>
    </source>
</evidence>
<evidence type="ECO:0000305" key="2"/>
<accession>B7GXH8</accession>
<sequence length="103" mass="11474">MYAVIQSGGKQHRVVEGETLKVELLKAESGATITFDDVLMVVNGDNIQIGAPVVAGAKVTAEVIGHGRHDKIRIIKMRRRKHYRKQQGHRQWFTELKITGISG</sequence>
<feature type="chain" id="PRO_1000143739" description="Large ribosomal subunit protein bL21">
    <location>
        <begin position="1"/>
        <end position="103"/>
    </location>
</feature>
<keyword id="KW-0687">Ribonucleoprotein</keyword>
<keyword id="KW-0689">Ribosomal protein</keyword>
<keyword id="KW-0694">RNA-binding</keyword>
<keyword id="KW-0699">rRNA-binding</keyword>
<reference key="1">
    <citation type="journal article" date="2008" name="J. Bacteriol.">
        <title>Comparative genome sequence analysis of multidrug-resistant Acinetobacter baumannii.</title>
        <authorList>
            <person name="Adams M.D."/>
            <person name="Goglin K."/>
            <person name="Molyneaux N."/>
            <person name="Hujer K.M."/>
            <person name="Lavender H."/>
            <person name="Jamison J.J."/>
            <person name="MacDonald I.J."/>
            <person name="Martin K.M."/>
            <person name="Russo T."/>
            <person name="Campagnari A.A."/>
            <person name="Hujer A.M."/>
            <person name="Bonomo R.A."/>
            <person name="Gill S.R."/>
        </authorList>
    </citation>
    <scope>NUCLEOTIDE SEQUENCE [LARGE SCALE GENOMIC DNA]</scope>
    <source>
        <strain>AB307-0294</strain>
    </source>
</reference>
<organism>
    <name type="scientific">Acinetobacter baumannii (strain AB307-0294)</name>
    <dbReference type="NCBI Taxonomy" id="557600"/>
    <lineage>
        <taxon>Bacteria</taxon>
        <taxon>Pseudomonadati</taxon>
        <taxon>Pseudomonadota</taxon>
        <taxon>Gammaproteobacteria</taxon>
        <taxon>Moraxellales</taxon>
        <taxon>Moraxellaceae</taxon>
        <taxon>Acinetobacter</taxon>
        <taxon>Acinetobacter calcoaceticus/baumannii complex</taxon>
    </lineage>
</organism>
<gene>
    <name evidence="1" type="primary">rplU</name>
    <name type="ordered locus">ABBFA_000737</name>
</gene>
<protein>
    <recommendedName>
        <fullName evidence="1">Large ribosomal subunit protein bL21</fullName>
    </recommendedName>
    <alternativeName>
        <fullName evidence="2">50S ribosomal protein L21</fullName>
    </alternativeName>
</protein>
<dbReference type="EMBL" id="CP001172">
    <property type="protein sequence ID" value="ACJ56732.1"/>
    <property type="molecule type" value="Genomic_DNA"/>
</dbReference>
<dbReference type="RefSeq" id="WP_000271409.1">
    <property type="nucleotide sequence ID" value="NZ_CP001172.1"/>
</dbReference>
<dbReference type="SMR" id="B7GXH8"/>
<dbReference type="GeneID" id="92895006"/>
<dbReference type="HOGENOM" id="CLU_061463_3_2_6"/>
<dbReference type="Proteomes" id="UP000006924">
    <property type="component" value="Chromosome"/>
</dbReference>
<dbReference type="GO" id="GO:0005737">
    <property type="term" value="C:cytoplasm"/>
    <property type="evidence" value="ECO:0007669"/>
    <property type="project" value="UniProtKB-ARBA"/>
</dbReference>
<dbReference type="GO" id="GO:1990904">
    <property type="term" value="C:ribonucleoprotein complex"/>
    <property type="evidence" value="ECO:0007669"/>
    <property type="project" value="UniProtKB-KW"/>
</dbReference>
<dbReference type="GO" id="GO:0005840">
    <property type="term" value="C:ribosome"/>
    <property type="evidence" value="ECO:0007669"/>
    <property type="project" value="UniProtKB-KW"/>
</dbReference>
<dbReference type="GO" id="GO:0019843">
    <property type="term" value="F:rRNA binding"/>
    <property type="evidence" value="ECO:0007669"/>
    <property type="project" value="UniProtKB-UniRule"/>
</dbReference>
<dbReference type="GO" id="GO:0003735">
    <property type="term" value="F:structural constituent of ribosome"/>
    <property type="evidence" value="ECO:0007669"/>
    <property type="project" value="InterPro"/>
</dbReference>
<dbReference type="GO" id="GO:0006412">
    <property type="term" value="P:translation"/>
    <property type="evidence" value="ECO:0007669"/>
    <property type="project" value="UniProtKB-UniRule"/>
</dbReference>
<dbReference type="HAMAP" id="MF_01363">
    <property type="entry name" value="Ribosomal_bL21"/>
    <property type="match status" value="1"/>
</dbReference>
<dbReference type="InterPro" id="IPR028909">
    <property type="entry name" value="bL21-like"/>
</dbReference>
<dbReference type="InterPro" id="IPR036164">
    <property type="entry name" value="bL21-like_sf"/>
</dbReference>
<dbReference type="InterPro" id="IPR001787">
    <property type="entry name" value="Ribosomal_bL21"/>
</dbReference>
<dbReference type="InterPro" id="IPR018258">
    <property type="entry name" value="Ribosomal_bL21_CS"/>
</dbReference>
<dbReference type="NCBIfam" id="TIGR00061">
    <property type="entry name" value="L21"/>
    <property type="match status" value="1"/>
</dbReference>
<dbReference type="PANTHER" id="PTHR21349">
    <property type="entry name" value="50S RIBOSOMAL PROTEIN L21"/>
    <property type="match status" value="1"/>
</dbReference>
<dbReference type="PANTHER" id="PTHR21349:SF0">
    <property type="entry name" value="LARGE RIBOSOMAL SUBUNIT PROTEIN BL21M"/>
    <property type="match status" value="1"/>
</dbReference>
<dbReference type="Pfam" id="PF00829">
    <property type="entry name" value="Ribosomal_L21p"/>
    <property type="match status" value="1"/>
</dbReference>
<dbReference type="SUPFAM" id="SSF141091">
    <property type="entry name" value="L21p-like"/>
    <property type="match status" value="1"/>
</dbReference>
<dbReference type="PROSITE" id="PS01169">
    <property type="entry name" value="RIBOSOMAL_L21"/>
    <property type="match status" value="1"/>
</dbReference>
<name>RL21_ACIB3</name>
<comment type="function">
    <text evidence="1">This protein binds to 23S rRNA in the presence of protein L20.</text>
</comment>
<comment type="subunit">
    <text evidence="1">Part of the 50S ribosomal subunit. Contacts protein L20.</text>
</comment>
<comment type="similarity">
    <text evidence="1">Belongs to the bacterial ribosomal protein bL21 family.</text>
</comment>